<sequence length="216" mass="24044">MIITIDGPSGTGKSTLAKALAQTLQFLYCNTGAMYRTLAYARLQPDWQEVPLEDFLASPPFSFSFSKDSPLQAFYGDRLLTSELSSQEVANFASLFSKEPLVRAYMQTLQKQYATVGNCVFEGRDMGSKVFPHAEVKIFLTAKPEIRAERRLKDLPQGSLPKEALMAELIARDQADQQRECDPLVIPQDAIVIDSSDLTISQILEKILPLIPSHLT</sequence>
<feature type="chain" id="PRO_1000100656" description="Cytidylate kinase">
    <location>
        <begin position="1"/>
        <end position="216"/>
    </location>
</feature>
<feature type="binding site" evidence="1">
    <location>
        <begin position="7"/>
        <end position="15"/>
    </location>
    <ligand>
        <name>ATP</name>
        <dbReference type="ChEBI" id="CHEBI:30616"/>
    </ligand>
</feature>
<comment type="catalytic activity">
    <reaction evidence="1">
        <text>CMP + ATP = CDP + ADP</text>
        <dbReference type="Rhea" id="RHEA:11600"/>
        <dbReference type="ChEBI" id="CHEBI:30616"/>
        <dbReference type="ChEBI" id="CHEBI:58069"/>
        <dbReference type="ChEBI" id="CHEBI:60377"/>
        <dbReference type="ChEBI" id="CHEBI:456216"/>
        <dbReference type="EC" id="2.7.4.25"/>
    </reaction>
</comment>
<comment type="catalytic activity">
    <reaction evidence="1">
        <text>dCMP + ATP = dCDP + ADP</text>
        <dbReference type="Rhea" id="RHEA:25094"/>
        <dbReference type="ChEBI" id="CHEBI:30616"/>
        <dbReference type="ChEBI" id="CHEBI:57566"/>
        <dbReference type="ChEBI" id="CHEBI:58593"/>
        <dbReference type="ChEBI" id="CHEBI:456216"/>
        <dbReference type="EC" id="2.7.4.25"/>
    </reaction>
</comment>
<comment type="subcellular location">
    <subcellularLocation>
        <location evidence="1">Cytoplasm</location>
    </subcellularLocation>
</comment>
<comment type="similarity">
    <text evidence="1">Belongs to the cytidylate kinase family. Type 1 subfamily.</text>
</comment>
<keyword id="KW-0067">ATP-binding</keyword>
<keyword id="KW-0963">Cytoplasm</keyword>
<keyword id="KW-0418">Kinase</keyword>
<keyword id="KW-0547">Nucleotide-binding</keyword>
<keyword id="KW-0808">Transferase</keyword>
<reference key="1">
    <citation type="journal article" date="2008" name="Genome Res.">
        <title>Chlamydia trachomatis: genome sequence analysis of lymphogranuloma venereum isolates.</title>
        <authorList>
            <person name="Thomson N.R."/>
            <person name="Holden M.T.G."/>
            <person name="Carder C."/>
            <person name="Lennard N."/>
            <person name="Lockey S.J."/>
            <person name="Marsh P."/>
            <person name="Skipp P."/>
            <person name="O'Connor C.D."/>
            <person name="Goodhead I."/>
            <person name="Norbertzcak H."/>
            <person name="Harris B."/>
            <person name="Ormond D."/>
            <person name="Rance R."/>
            <person name="Quail M.A."/>
            <person name="Parkhill J."/>
            <person name="Stephens R.S."/>
            <person name="Clarke I.N."/>
        </authorList>
    </citation>
    <scope>NUCLEOTIDE SEQUENCE [LARGE SCALE GENOMIC DNA]</scope>
    <source>
        <strain>ATCC VR-902B / DSM 19102 / 434/Bu</strain>
    </source>
</reference>
<name>KCY_CHLT2</name>
<protein>
    <recommendedName>
        <fullName evidence="1">Cytidylate kinase</fullName>
        <shortName evidence="1">CK</shortName>
        <ecNumber evidence="1">2.7.4.25</ecNumber>
    </recommendedName>
    <alternativeName>
        <fullName evidence="1">Cytidine monophosphate kinase</fullName>
        <shortName evidence="1">CMP kinase</shortName>
    </alternativeName>
</protein>
<evidence type="ECO:0000255" key="1">
    <source>
        <dbReference type="HAMAP-Rule" id="MF_00238"/>
    </source>
</evidence>
<organism>
    <name type="scientific">Chlamydia trachomatis serovar L2 (strain ATCC VR-902B / DSM 19102 / 434/Bu)</name>
    <dbReference type="NCBI Taxonomy" id="471472"/>
    <lineage>
        <taxon>Bacteria</taxon>
        <taxon>Pseudomonadati</taxon>
        <taxon>Chlamydiota</taxon>
        <taxon>Chlamydiia</taxon>
        <taxon>Chlamydiales</taxon>
        <taxon>Chlamydiaceae</taxon>
        <taxon>Chlamydia/Chlamydophila group</taxon>
        <taxon>Chlamydia</taxon>
    </lineage>
</organism>
<proteinExistence type="inferred from homology"/>
<gene>
    <name evidence="1" type="primary">cmk</name>
    <name type="ordered locus">CTL0712</name>
</gene>
<dbReference type="EC" id="2.7.4.25" evidence="1"/>
<dbReference type="EMBL" id="AM884176">
    <property type="protein sequence ID" value="CAP04151.1"/>
    <property type="molecule type" value="Genomic_DNA"/>
</dbReference>
<dbReference type="RefSeq" id="WP_009873821.1">
    <property type="nucleotide sequence ID" value="NC_010287.1"/>
</dbReference>
<dbReference type="RefSeq" id="YP_001654784.1">
    <property type="nucleotide sequence ID" value="NC_010287.1"/>
</dbReference>
<dbReference type="SMR" id="B0B825"/>
<dbReference type="KEGG" id="ctb:CTL0712"/>
<dbReference type="PATRIC" id="fig|471472.4.peg.764"/>
<dbReference type="HOGENOM" id="CLU_079959_0_2_0"/>
<dbReference type="Proteomes" id="UP001154402">
    <property type="component" value="Chromosome"/>
</dbReference>
<dbReference type="GO" id="GO:0005737">
    <property type="term" value="C:cytoplasm"/>
    <property type="evidence" value="ECO:0007669"/>
    <property type="project" value="UniProtKB-SubCell"/>
</dbReference>
<dbReference type="GO" id="GO:0005524">
    <property type="term" value="F:ATP binding"/>
    <property type="evidence" value="ECO:0007669"/>
    <property type="project" value="UniProtKB-UniRule"/>
</dbReference>
<dbReference type="GO" id="GO:0036430">
    <property type="term" value="F:CMP kinase activity"/>
    <property type="evidence" value="ECO:0007669"/>
    <property type="project" value="RHEA"/>
</dbReference>
<dbReference type="GO" id="GO:0036431">
    <property type="term" value="F:dCMP kinase activity"/>
    <property type="evidence" value="ECO:0007669"/>
    <property type="project" value="RHEA"/>
</dbReference>
<dbReference type="GO" id="GO:0006220">
    <property type="term" value="P:pyrimidine nucleotide metabolic process"/>
    <property type="evidence" value="ECO:0007669"/>
    <property type="project" value="UniProtKB-UniRule"/>
</dbReference>
<dbReference type="CDD" id="cd02020">
    <property type="entry name" value="CMPK"/>
    <property type="match status" value="1"/>
</dbReference>
<dbReference type="FunFam" id="3.40.50.300:FF:003002">
    <property type="entry name" value="Cytidylate kinase"/>
    <property type="match status" value="1"/>
</dbReference>
<dbReference type="Gene3D" id="3.40.50.300">
    <property type="entry name" value="P-loop containing nucleotide triphosphate hydrolases"/>
    <property type="match status" value="1"/>
</dbReference>
<dbReference type="HAMAP" id="MF_00238">
    <property type="entry name" value="Cytidyl_kinase_type1"/>
    <property type="match status" value="1"/>
</dbReference>
<dbReference type="InterPro" id="IPR003136">
    <property type="entry name" value="Cytidylate_kin"/>
</dbReference>
<dbReference type="InterPro" id="IPR011994">
    <property type="entry name" value="Cytidylate_kinase_dom"/>
</dbReference>
<dbReference type="InterPro" id="IPR027417">
    <property type="entry name" value="P-loop_NTPase"/>
</dbReference>
<dbReference type="NCBIfam" id="TIGR00017">
    <property type="entry name" value="cmk"/>
    <property type="match status" value="1"/>
</dbReference>
<dbReference type="Pfam" id="PF02224">
    <property type="entry name" value="Cytidylate_kin"/>
    <property type="match status" value="1"/>
</dbReference>
<dbReference type="SUPFAM" id="SSF52540">
    <property type="entry name" value="P-loop containing nucleoside triphosphate hydrolases"/>
    <property type="match status" value="1"/>
</dbReference>
<accession>B0B825</accession>